<accession>Q0K630</accession>
<proteinExistence type="inferred from homology"/>
<gene>
    <name evidence="1" type="primary">rplX</name>
    <name type="ordered locus">H16_A3473</name>
</gene>
<sequence>MNKIRKGDEVIVLTGKDKGKRGTVQAVLGDKVAVQGVNIAKKHARPNPMLGTTGGVVDKVMPLHISNVALVDANGKPSRVGIKVEDGKRVRVLKTTGAVVAA</sequence>
<reference key="1">
    <citation type="journal article" date="2006" name="Nat. Biotechnol.">
        <title>Genome sequence of the bioplastic-producing 'Knallgas' bacterium Ralstonia eutropha H16.</title>
        <authorList>
            <person name="Pohlmann A."/>
            <person name="Fricke W.F."/>
            <person name="Reinecke F."/>
            <person name="Kusian B."/>
            <person name="Liesegang H."/>
            <person name="Cramm R."/>
            <person name="Eitinger T."/>
            <person name="Ewering C."/>
            <person name="Poetter M."/>
            <person name="Schwartz E."/>
            <person name="Strittmatter A."/>
            <person name="Voss I."/>
            <person name="Gottschalk G."/>
            <person name="Steinbuechel A."/>
            <person name="Friedrich B."/>
            <person name="Bowien B."/>
        </authorList>
    </citation>
    <scope>NUCLEOTIDE SEQUENCE [LARGE SCALE GENOMIC DNA]</scope>
    <source>
        <strain>ATCC 17699 / DSM 428 / KCTC 22496 / NCIMB 10442 / H16 / Stanier 337</strain>
    </source>
</reference>
<comment type="function">
    <text evidence="1">One of two assembly initiator proteins, it binds directly to the 5'-end of the 23S rRNA, where it nucleates assembly of the 50S subunit.</text>
</comment>
<comment type="function">
    <text evidence="1">One of the proteins that surrounds the polypeptide exit tunnel on the outside of the subunit.</text>
</comment>
<comment type="subunit">
    <text evidence="1">Part of the 50S ribosomal subunit.</text>
</comment>
<comment type="similarity">
    <text evidence="1">Belongs to the universal ribosomal protein uL24 family.</text>
</comment>
<protein>
    <recommendedName>
        <fullName evidence="1">Large ribosomal subunit protein uL24</fullName>
    </recommendedName>
    <alternativeName>
        <fullName evidence="2">50S ribosomal protein L24</fullName>
    </alternativeName>
</protein>
<name>RL24_CUPNH</name>
<keyword id="KW-1185">Reference proteome</keyword>
<keyword id="KW-0687">Ribonucleoprotein</keyword>
<keyword id="KW-0689">Ribosomal protein</keyword>
<keyword id="KW-0694">RNA-binding</keyword>
<keyword id="KW-0699">rRNA-binding</keyword>
<evidence type="ECO:0000255" key="1">
    <source>
        <dbReference type="HAMAP-Rule" id="MF_01326"/>
    </source>
</evidence>
<evidence type="ECO:0000305" key="2"/>
<dbReference type="EMBL" id="AM260479">
    <property type="protein sequence ID" value="CAJ94541.1"/>
    <property type="molecule type" value="Genomic_DNA"/>
</dbReference>
<dbReference type="RefSeq" id="WP_010812387.1">
    <property type="nucleotide sequence ID" value="NZ_CP039287.1"/>
</dbReference>
<dbReference type="SMR" id="Q0K630"/>
<dbReference type="STRING" id="381666.H16_A3473"/>
<dbReference type="GeneID" id="34310489"/>
<dbReference type="KEGG" id="reh:H16_A3473"/>
<dbReference type="eggNOG" id="COG0198">
    <property type="taxonomic scope" value="Bacteria"/>
</dbReference>
<dbReference type="HOGENOM" id="CLU_093315_2_2_4"/>
<dbReference type="OrthoDB" id="9807419at2"/>
<dbReference type="Proteomes" id="UP000008210">
    <property type="component" value="Chromosome 1"/>
</dbReference>
<dbReference type="GO" id="GO:1990904">
    <property type="term" value="C:ribonucleoprotein complex"/>
    <property type="evidence" value="ECO:0007669"/>
    <property type="project" value="UniProtKB-KW"/>
</dbReference>
<dbReference type="GO" id="GO:0005840">
    <property type="term" value="C:ribosome"/>
    <property type="evidence" value="ECO:0007669"/>
    <property type="project" value="UniProtKB-KW"/>
</dbReference>
<dbReference type="GO" id="GO:0019843">
    <property type="term" value="F:rRNA binding"/>
    <property type="evidence" value="ECO:0007669"/>
    <property type="project" value="UniProtKB-UniRule"/>
</dbReference>
<dbReference type="GO" id="GO:0003735">
    <property type="term" value="F:structural constituent of ribosome"/>
    <property type="evidence" value="ECO:0007669"/>
    <property type="project" value="InterPro"/>
</dbReference>
<dbReference type="GO" id="GO:0006412">
    <property type="term" value="P:translation"/>
    <property type="evidence" value="ECO:0007669"/>
    <property type="project" value="UniProtKB-UniRule"/>
</dbReference>
<dbReference type="CDD" id="cd06089">
    <property type="entry name" value="KOW_RPL26"/>
    <property type="match status" value="1"/>
</dbReference>
<dbReference type="Gene3D" id="2.30.30.30">
    <property type="match status" value="1"/>
</dbReference>
<dbReference type="HAMAP" id="MF_01326_B">
    <property type="entry name" value="Ribosomal_uL24_B"/>
    <property type="match status" value="1"/>
</dbReference>
<dbReference type="InterPro" id="IPR005824">
    <property type="entry name" value="KOW"/>
</dbReference>
<dbReference type="InterPro" id="IPR014722">
    <property type="entry name" value="Rib_uL2_dom2"/>
</dbReference>
<dbReference type="InterPro" id="IPR003256">
    <property type="entry name" value="Ribosomal_uL24"/>
</dbReference>
<dbReference type="InterPro" id="IPR005825">
    <property type="entry name" value="Ribosomal_uL24_CS"/>
</dbReference>
<dbReference type="InterPro" id="IPR041988">
    <property type="entry name" value="Ribosomal_uL24_KOW"/>
</dbReference>
<dbReference type="InterPro" id="IPR008991">
    <property type="entry name" value="Translation_prot_SH3-like_sf"/>
</dbReference>
<dbReference type="NCBIfam" id="TIGR01079">
    <property type="entry name" value="rplX_bact"/>
    <property type="match status" value="1"/>
</dbReference>
<dbReference type="PANTHER" id="PTHR12903">
    <property type="entry name" value="MITOCHONDRIAL RIBOSOMAL PROTEIN L24"/>
    <property type="match status" value="1"/>
</dbReference>
<dbReference type="Pfam" id="PF00467">
    <property type="entry name" value="KOW"/>
    <property type="match status" value="1"/>
</dbReference>
<dbReference type="Pfam" id="PF17136">
    <property type="entry name" value="ribosomal_L24"/>
    <property type="match status" value="1"/>
</dbReference>
<dbReference type="SMART" id="SM00739">
    <property type="entry name" value="KOW"/>
    <property type="match status" value="1"/>
</dbReference>
<dbReference type="SUPFAM" id="SSF50104">
    <property type="entry name" value="Translation proteins SH3-like domain"/>
    <property type="match status" value="1"/>
</dbReference>
<dbReference type="PROSITE" id="PS01108">
    <property type="entry name" value="RIBOSOMAL_L24"/>
    <property type="match status" value="1"/>
</dbReference>
<feature type="chain" id="PRO_1000052287" description="Large ribosomal subunit protein uL24">
    <location>
        <begin position="1"/>
        <end position="102"/>
    </location>
</feature>
<organism>
    <name type="scientific">Cupriavidus necator (strain ATCC 17699 / DSM 428 / KCTC 22496 / NCIMB 10442 / H16 / Stanier 337)</name>
    <name type="common">Ralstonia eutropha</name>
    <dbReference type="NCBI Taxonomy" id="381666"/>
    <lineage>
        <taxon>Bacteria</taxon>
        <taxon>Pseudomonadati</taxon>
        <taxon>Pseudomonadota</taxon>
        <taxon>Betaproteobacteria</taxon>
        <taxon>Burkholderiales</taxon>
        <taxon>Burkholderiaceae</taxon>
        <taxon>Cupriavidus</taxon>
    </lineage>
</organism>